<keyword id="KW-1185">Reference proteome</keyword>
<feature type="chain" id="PRO_0000304869" description="UPF0473 protein SSA_2239">
    <location>
        <begin position="1"/>
        <end position="103"/>
    </location>
</feature>
<gene>
    <name type="ordered locus">SSA_2239</name>
</gene>
<comment type="similarity">
    <text evidence="1">Belongs to the UPF0473 family.</text>
</comment>
<reference key="1">
    <citation type="journal article" date="2007" name="J. Bacteriol.">
        <title>Genome of the opportunistic pathogen Streptococcus sanguinis.</title>
        <authorList>
            <person name="Xu P."/>
            <person name="Alves J.M."/>
            <person name="Kitten T."/>
            <person name="Brown A."/>
            <person name="Chen Z."/>
            <person name="Ozaki L.S."/>
            <person name="Manque P."/>
            <person name="Ge X."/>
            <person name="Serrano M.G."/>
            <person name="Puiu D."/>
            <person name="Hendricks S."/>
            <person name="Wang Y."/>
            <person name="Chaplin M.D."/>
            <person name="Akan D."/>
            <person name="Paik S."/>
            <person name="Peterson D.L."/>
            <person name="Macrina F.L."/>
            <person name="Buck G.A."/>
        </authorList>
    </citation>
    <scope>NUCLEOTIDE SEQUENCE [LARGE SCALE GENOMIC DNA]</scope>
    <source>
        <strain>SK36</strain>
    </source>
</reference>
<proteinExistence type="inferred from homology"/>
<protein>
    <recommendedName>
        <fullName evidence="1">UPF0473 protein SSA_2239</fullName>
    </recommendedName>
</protein>
<sequence length="103" mass="11942">MTHDHNHDHEHEERELITLVDEQGNETLFEILLTIDGKEEFGKNYVLLIPANAEEDENGEVEIQAYSFTENEDGTEGDLQPIPEDSDAEWDMIEEVFNSFMEE</sequence>
<dbReference type="EMBL" id="CP000387">
    <property type="protein sequence ID" value="ABN45601.1"/>
    <property type="molecule type" value="Genomic_DNA"/>
</dbReference>
<dbReference type="RefSeq" id="WP_002894073.1">
    <property type="nucleotide sequence ID" value="NZ_CAXTYR010000002.1"/>
</dbReference>
<dbReference type="RefSeq" id="YP_001036151.1">
    <property type="nucleotide sequence ID" value="NC_009009.1"/>
</dbReference>
<dbReference type="STRING" id="388919.SSA_2239"/>
<dbReference type="KEGG" id="ssa:SSA_2239"/>
<dbReference type="PATRIC" id="fig|388919.9.peg.2121"/>
<dbReference type="eggNOG" id="COG3906">
    <property type="taxonomic scope" value="Bacteria"/>
</dbReference>
<dbReference type="HOGENOM" id="CLU_146610_2_1_9"/>
<dbReference type="OrthoDB" id="2086132at2"/>
<dbReference type="Proteomes" id="UP000002148">
    <property type="component" value="Chromosome"/>
</dbReference>
<dbReference type="HAMAP" id="MF_01448">
    <property type="entry name" value="UPF0473"/>
    <property type="match status" value="1"/>
</dbReference>
<dbReference type="InterPro" id="IPR009711">
    <property type="entry name" value="UPF0473"/>
</dbReference>
<dbReference type="NCBIfam" id="NF010215">
    <property type="entry name" value="PRK13678.1-2"/>
    <property type="match status" value="1"/>
</dbReference>
<dbReference type="NCBIfam" id="NF010217">
    <property type="entry name" value="PRK13678.1-4"/>
    <property type="match status" value="1"/>
</dbReference>
<dbReference type="PANTHER" id="PTHR40066">
    <property type="entry name" value="UPF0473 PROTEIN CBO2561/CLC_2432"/>
    <property type="match status" value="1"/>
</dbReference>
<dbReference type="PANTHER" id="PTHR40066:SF1">
    <property type="entry name" value="UPF0473 PROTEIN CBO2561_CLC_2432"/>
    <property type="match status" value="1"/>
</dbReference>
<dbReference type="Pfam" id="PF06949">
    <property type="entry name" value="DUF1292"/>
    <property type="match status" value="1"/>
</dbReference>
<organism>
    <name type="scientific">Streptococcus sanguinis (strain SK36)</name>
    <dbReference type="NCBI Taxonomy" id="388919"/>
    <lineage>
        <taxon>Bacteria</taxon>
        <taxon>Bacillati</taxon>
        <taxon>Bacillota</taxon>
        <taxon>Bacilli</taxon>
        <taxon>Lactobacillales</taxon>
        <taxon>Streptococcaceae</taxon>
        <taxon>Streptococcus</taxon>
    </lineage>
</organism>
<evidence type="ECO:0000255" key="1">
    <source>
        <dbReference type="HAMAP-Rule" id="MF_01448"/>
    </source>
</evidence>
<name>Y2239_STRSV</name>
<accession>A3CQZ6</accession>